<dbReference type="EC" id="6.3.5.-" evidence="1"/>
<dbReference type="EMBL" id="CP000227">
    <property type="protein sequence ID" value="ACM10842.1"/>
    <property type="molecule type" value="Genomic_DNA"/>
</dbReference>
<dbReference type="SMR" id="B9J1M9"/>
<dbReference type="KEGG" id="bcq:BCQ_0370"/>
<dbReference type="HOGENOM" id="CLU_105899_6_1_9"/>
<dbReference type="Proteomes" id="UP000000441">
    <property type="component" value="Chromosome"/>
</dbReference>
<dbReference type="GO" id="GO:0050566">
    <property type="term" value="F:asparaginyl-tRNA synthase (glutamine-hydrolyzing) activity"/>
    <property type="evidence" value="ECO:0007669"/>
    <property type="project" value="RHEA"/>
</dbReference>
<dbReference type="GO" id="GO:0005524">
    <property type="term" value="F:ATP binding"/>
    <property type="evidence" value="ECO:0007669"/>
    <property type="project" value="UniProtKB-KW"/>
</dbReference>
<dbReference type="GO" id="GO:0050567">
    <property type="term" value="F:glutaminyl-tRNA synthase (glutamine-hydrolyzing) activity"/>
    <property type="evidence" value="ECO:0007669"/>
    <property type="project" value="UniProtKB-UniRule"/>
</dbReference>
<dbReference type="GO" id="GO:0070681">
    <property type="term" value="P:glutaminyl-tRNAGln biosynthesis via transamidation"/>
    <property type="evidence" value="ECO:0007669"/>
    <property type="project" value="TreeGrafter"/>
</dbReference>
<dbReference type="GO" id="GO:0006450">
    <property type="term" value="P:regulation of translational fidelity"/>
    <property type="evidence" value="ECO:0007669"/>
    <property type="project" value="InterPro"/>
</dbReference>
<dbReference type="GO" id="GO:0006412">
    <property type="term" value="P:translation"/>
    <property type="evidence" value="ECO:0007669"/>
    <property type="project" value="UniProtKB-UniRule"/>
</dbReference>
<dbReference type="Gene3D" id="1.10.20.60">
    <property type="entry name" value="Glu-tRNAGln amidotransferase C subunit, N-terminal domain"/>
    <property type="match status" value="1"/>
</dbReference>
<dbReference type="HAMAP" id="MF_00122">
    <property type="entry name" value="GatC"/>
    <property type="match status" value="1"/>
</dbReference>
<dbReference type="InterPro" id="IPR036113">
    <property type="entry name" value="Asp/Glu-ADT_sf_sub_c"/>
</dbReference>
<dbReference type="InterPro" id="IPR003837">
    <property type="entry name" value="GatC"/>
</dbReference>
<dbReference type="NCBIfam" id="TIGR00135">
    <property type="entry name" value="gatC"/>
    <property type="match status" value="1"/>
</dbReference>
<dbReference type="PANTHER" id="PTHR15004">
    <property type="entry name" value="GLUTAMYL-TRNA(GLN) AMIDOTRANSFERASE SUBUNIT C, MITOCHONDRIAL"/>
    <property type="match status" value="1"/>
</dbReference>
<dbReference type="PANTHER" id="PTHR15004:SF0">
    <property type="entry name" value="GLUTAMYL-TRNA(GLN) AMIDOTRANSFERASE SUBUNIT C, MITOCHONDRIAL"/>
    <property type="match status" value="1"/>
</dbReference>
<dbReference type="Pfam" id="PF02686">
    <property type="entry name" value="GatC"/>
    <property type="match status" value="1"/>
</dbReference>
<dbReference type="SUPFAM" id="SSF141000">
    <property type="entry name" value="Glu-tRNAGln amidotransferase C subunit"/>
    <property type="match status" value="1"/>
</dbReference>
<protein>
    <recommendedName>
        <fullName evidence="1">Aspartyl/glutamyl-tRNA(Asn/Gln) amidotransferase subunit C</fullName>
        <shortName evidence="1">Asp/Glu-ADT subunit C</shortName>
        <ecNumber evidence="1">6.3.5.-</ecNumber>
    </recommendedName>
</protein>
<feature type="chain" id="PRO_1000122554" description="Aspartyl/glutamyl-tRNA(Asn/Gln) amidotransferase subunit C">
    <location>
        <begin position="1"/>
        <end position="96"/>
    </location>
</feature>
<reference key="1">
    <citation type="journal article" date="2009" name="J. Bacteriol.">
        <title>Complete genome sequence of the extremophilic Bacillus cereus strain Q1 with industrial applications.</title>
        <authorList>
            <person name="Xiong Z."/>
            <person name="Jiang Y."/>
            <person name="Qi D."/>
            <person name="Lu H."/>
            <person name="Yang F."/>
            <person name="Yang J."/>
            <person name="Chen L."/>
            <person name="Sun L."/>
            <person name="Xu X."/>
            <person name="Xue Y."/>
            <person name="Zhu Y."/>
            <person name="Jin Q."/>
        </authorList>
    </citation>
    <scope>NUCLEOTIDE SEQUENCE [LARGE SCALE GENOMIC DNA]</scope>
    <source>
        <strain>Q1</strain>
    </source>
</reference>
<gene>
    <name evidence="1" type="primary">gatC</name>
    <name type="ordered locus">BCQ_0370</name>
</gene>
<evidence type="ECO:0000255" key="1">
    <source>
        <dbReference type="HAMAP-Rule" id="MF_00122"/>
    </source>
</evidence>
<proteinExistence type="inferred from homology"/>
<name>GATC_BACCQ</name>
<accession>B9J1M9</accession>
<keyword id="KW-0067">ATP-binding</keyword>
<keyword id="KW-0436">Ligase</keyword>
<keyword id="KW-0547">Nucleotide-binding</keyword>
<keyword id="KW-0648">Protein biosynthesis</keyword>
<sequence>MSRISVENVKHVAHLARLAITDQEAEKFQKQLDAIVTFAEQLNELDTTDVKPTTHVLTMKNVMREDVPEKGLPVEEVLKNAPDHKDNQIRVPAVLE</sequence>
<organism>
    <name type="scientific">Bacillus cereus (strain Q1)</name>
    <dbReference type="NCBI Taxonomy" id="361100"/>
    <lineage>
        <taxon>Bacteria</taxon>
        <taxon>Bacillati</taxon>
        <taxon>Bacillota</taxon>
        <taxon>Bacilli</taxon>
        <taxon>Bacillales</taxon>
        <taxon>Bacillaceae</taxon>
        <taxon>Bacillus</taxon>
        <taxon>Bacillus cereus group</taxon>
    </lineage>
</organism>
<comment type="function">
    <text evidence="1">Allows the formation of correctly charged Asn-tRNA(Asn) or Gln-tRNA(Gln) through the transamidation of misacylated Asp-tRNA(Asn) or Glu-tRNA(Gln) in organisms which lack either or both of asparaginyl-tRNA or glutaminyl-tRNA synthetases. The reaction takes place in the presence of glutamine and ATP through an activated phospho-Asp-tRNA(Asn) or phospho-Glu-tRNA(Gln).</text>
</comment>
<comment type="catalytic activity">
    <reaction evidence="1">
        <text>L-glutamyl-tRNA(Gln) + L-glutamine + ATP + H2O = L-glutaminyl-tRNA(Gln) + L-glutamate + ADP + phosphate + H(+)</text>
        <dbReference type="Rhea" id="RHEA:17521"/>
        <dbReference type="Rhea" id="RHEA-COMP:9681"/>
        <dbReference type="Rhea" id="RHEA-COMP:9684"/>
        <dbReference type="ChEBI" id="CHEBI:15377"/>
        <dbReference type="ChEBI" id="CHEBI:15378"/>
        <dbReference type="ChEBI" id="CHEBI:29985"/>
        <dbReference type="ChEBI" id="CHEBI:30616"/>
        <dbReference type="ChEBI" id="CHEBI:43474"/>
        <dbReference type="ChEBI" id="CHEBI:58359"/>
        <dbReference type="ChEBI" id="CHEBI:78520"/>
        <dbReference type="ChEBI" id="CHEBI:78521"/>
        <dbReference type="ChEBI" id="CHEBI:456216"/>
    </reaction>
</comment>
<comment type="catalytic activity">
    <reaction evidence="1">
        <text>L-aspartyl-tRNA(Asn) + L-glutamine + ATP + H2O = L-asparaginyl-tRNA(Asn) + L-glutamate + ADP + phosphate + 2 H(+)</text>
        <dbReference type="Rhea" id="RHEA:14513"/>
        <dbReference type="Rhea" id="RHEA-COMP:9674"/>
        <dbReference type="Rhea" id="RHEA-COMP:9677"/>
        <dbReference type="ChEBI" id="CHEBI:15377"/>
        <dbReference type="ChEBI" id="CHEBI:15378"/>
        <dbReference type="ChEBI" id="CHEBI:29985"/>
        <dbReference type="ChEBI" id="CHEBI:30616"/>
        <dbReference type="ChEBI" id="CHEBI:43474"/>
        <dbReference type="ChEBI" id="CHEBI:58359"/>
        <dbReference type="ChEBI" id="CHEBI:78515"/>
        <dbReference type="ChEBI" id="CHEBI:78516"/>
        <dbReference type="ChEBI" id="CHEBI:456216"/>
    </reaction>
</comment>
<comment type="subunit">
    <text evidence="1">Heterotrimer of A, B and C subunits.</text>
</comment>
<comment type="similarity">
    <text evidence="1">Belongs to the GatC family.</text>
</comment>